<feature type="chain" id="PRO_0000107235" description="Uncharacterized protein MJ1244">
    <location>
        <begin position="1"/>
        <end position="108"/>
    </location>
</feature>
<accession>Q58641</accession>
<sequence>MKILLYLFVESENVGKAINALSEGGITGFFLYDYKGMSPQDWQGFLLDEDPEMAIKAVSDLAQNAVLIGTIVSENKLMEIEKLIDEKLADCKYTIIEIPIEGIIVNMP</sequence>
<gene>
    <name type="ordered locus">MJ1244</name>
</gene>
<evidence type="ECO:0000305" key="1"/>
<organism>
    <name type="scientific">Methanocaldococcus jannaschii (strain ATCC 43067 / DSM 2661 / JAL-1 / JCM 10045 / NBRC 100440)</name>
    <name type="common">Methanococcus jannaschii</name>
    <dbReference type="NCBI Taxonomy" id="243232"/>
    <lineage>
        <taxon>Archaea</taxon>
        <taxon>Methanobacteriati</taxon>
        <taxon>Methanobacteriota</taxon>
        <taxon>Methanomada group</taxon>
        <taxon>Methanococci</taxon>
        <taxon>Methanococcales</taxon>
        <taxon>Methanocaldococcaceae</taxon>
        <taxon>Methanocaldococcus</taxon>
    </lineage>
</organism>
<reference key="1">
    <citation type="journal article" date="1996" name="Science">
        <title>Complete genome sequence of the methanogenic archaeon, Methanococcus jannaschii.</title>
        <authorList>
            <person name="Bult C.J."/>
            <person name="White O."/>
            <person name="Olsen G.J."/>
            <person name="Zhou L."/>
            <person name="Fleischmann R.D."/>
            <person name="Sutton G.G."/>
            <person name="Blake J.A."/>
            <person name="FitzGerald L.M."/>
            <person name="Clayton R.A."/>
            <person name="Gocayne J.D."/>
            <person name="Kerlavage A.R."/>
            <person name="Dougherty B.A."/>
            <person name="Tomb J.-F."/>
            <person name="Adams M.D."/>
            <person name="Reich C.I."/>
            <person name="Overbeek R."/>
            <person name="Kirkness E.F."/>
            <person name="Weinstock K.G."/>
            <person name="Merrick J.M."/>
            <person name="Glodek A."/>
            <person name="Scott J.L."/>
            <person name="Geoghagen N.S.M."/>
            <person name="Weidman J.F."/>
            <person name="Fuhrmann J.L."/>
            <person name="Nguyen D."/>
            <person name="Utterback T.R."/>
            <person name="Kelley J.M."/>
            <person name="Peterson J.D."/>
            <person name="Sadow P.W."/>
            <person name="Hanna M.C."/>
            <person name="Cotton M.D."/>
            <person name="Roberts K.M."/>
            <person name="Hurst M.A."/>
            <person name="Kaine B.P."/>
            <person name="Borodovsky M."/>
            <person name="Klenk H.-P."/>
            <person name="Fraser C.M."/>
            <person name="Smith H.O."/>
            <person name="Woese C.R."/>
            <person name="Venter J.C."/>
        </authorList>
    </citation>
    <scope>NUCLEOTIDE SEQUENCE [LARGE SCALE GENOMIC DNA]</scope>
    <source>
        <strain>ATCC 43067 / DSM 2661 / JAL-1 / JCM 10045 / NBRC 100440</strain>
    </source>
</reference>
<protein>
    <recommendedName>
        <fullName>Uncharacterized protein MJ1244</fullName>
    </recommendedName>
</protein>
<name>Y1244_METJA</name>
<comment type="similarity">
    <text evidence="1">To M.jannaschii MJ1245 and M.thermoautotrophicum MTH1110.</text>
</comment>
<keyword id="KW-1185">Reference proteome</keyword>
<proteinExistence type="predicted"/>
<dbReference type="EMBL" id="L77117">
    <property type="protein sequence ID" value="AAB99249.1"/>
    <property type="molecule type" value="Genomic_DNA"/>
</dbReference>
<dbReference type="PIR" id="C64455">
    <property type="entry name" value="C64455"/>
</dbReference>
<dbReference type="RefSeq" id="WP_010870756.1">
    <property type="nucleotide sequence ID" value="NC_000909.1"/>
</dbReference>
<dbReference type="SMR" id="Q58641"/>
<dbReference type="FunCoup" id="Q58641">
    <property type="interactions" value="1"/>
</dbReference>
<dbReference type="STRING" id="243232.MJ_1244"/>
<dbReference type="PaxDb" id="243232-MJ_1244"/>
<dbReference type="EnsemblBacteria" id="AAB99249">
    <property type="protein sequence ID" value="AAB99249"/>
    <property type="gene ID" value="MJ_1244"/>
</dbReference>
<dbReference type="GeneID" id="1452140"/>
<dbReference type="KEGG" id="mja:MJ_1244"/>
<dbReference type="eggNOG" id="arCOG03424">
    <property type="taxonomic scope" value="Archaea"/>
</dbReference>
<dbReference type="HOGENOM" id="CLU_145179_0_0_2"/>
<dbReference type="InParanoid" id="Q58641"/>
<dbReference type="OrthoDB" id="146891at2157"/>
<dbReference type="PhylomeDB" id="Q58641"/>
<dbReference type="Proteomes" id="UP000000805">
    <property type="component" value="Chromosome"/>
</dbReference>
<dbReference type="InterPro" id="IPR011322">
    <property type="entry name" value="N-reg_PII-like_a/b"/>
</dbReference>
<dbReference type="InterPro" id="IPR024184">
    <property type="entry name" value="UCP005637"/>
</dbReference>
<dbReference type="InterPro" id="IPR019296">
    <property type="entry name" value="Unchr_N-regulatory-PII-rel"/>
</dbReference>
<dbReference type="Pfam" id="PF10126">
    <property type="entry name" value="Nit_Regul_Hom"/>
    <property type="match status" value="1"/>
</dbReference>
<dbReference type="PIRSF" id="PIRSF005637">
    <property type="entry name" value="UCP005637"/>
    <property type="match status" value="1"/>
</dbReference>
<dbReference type="SUPFAM" id="SSF54913">
    <property type="entry name" value="GlnB-like"/>
    <property type="match status" value="1"/>
</dbReference>